<dbReference type="EMBL" id="AE017194">
    <property type="protein sequence ID" value="AAS42791.1"/>
    <property type="molecule type" value="Genomic_DNA"/>
</dbReference>
<dbReference type="SMR" id="P62226"/>
<dbReference type="KEGG" id="bca:BCE_3886"/>
<dbReference type="HOGENOM" id="CLU_100590_5_0_9"/>
<dbReference type="Proteomes" id="UP000002527">
    <property type="component" value="Chromosome"/>
</dbReference>
<dbReference type="GO" id="GO:0005737">
    <property type="term" value="C:cytoplasm"/>
    <property type="evidence" value="ECO:0007669"/>
    <property type="project" value="UniProtKB-ARBA"/>
</dbReference>
<dbReference type="GO" id="GO:0015935">
    <property type="term" value="C:small ribosomal subunit"/>
    <property type="evidence" value="ECO:0007669"/>
    <property type="project" value="TreeGrafter"/>
</dbReference>
<dbReference type="GO" id="GO:0003735">
    <property type="term" value="F:structural constituent of ribosome"/>
    <property type="evidence" value="ECO:0007669"/>
    <property type="project" value="InterPro"/>
</dbReference>
<dbReference type="GO" id="GO:0006412">
    <property type="term" value="P:translation"/>
    <property type="evidence" value="ECO:0007669"/>
    <property type="project" value="UniProtKB-UniRule"/>
</dbReference>
<dbReference type="FunFam" id="3.30.1320.10:FF:000002">
    <property type="entry name" value="30S ribosomal protein S16"/>
    <property type="match status" value="1"/>
</dbReference>
<dbReference type="Gene3D" id="3.30.1320.10">
    <property type="match status" value="1"/>
</dbReference>
<dbReference type="HAMAP" id="MF_00385">
    <property type="entry name" value="Ribosomal_bS16"/>
    <property type="match status" value="1"/>
</dbReference>
<dbReference type="InterPro" id="IPR000307">
    <property type="entry name" value="Ribosomal_bS16"/>
</dbReference>
<dbReference type="InterPro" id="IPR020592">
    <property type="entry name" value="Ribosomal_bS16_CS"/>
</dbReference>
<dbReference type="InterPro" id="IPR023803">
    <property type="entry name" value="Ribosomal_bS16_dom_sf"/>
</dbReference>
<dbReference type="NCBIfam" id="TIGR00002">
    <property type="entry name" value="S16"/>
    <property type="match status" value="1"/>
</dbReference>
<dbReference type="PANTHER" id="PTHR12919">
    <property type="entry name" value="30S RIBOSOMAL PROTEIN S16"/>
    <property type="match status" value="1"/>
</dbReference>
<dbReference type="PANTHER" id="PTHR12919:SF20">
    <property type="entry name" value="SMALL RIBOSOMAL SUBUNIT PROTEIN BS16M"/>
    <property type="match status" value="1"/>
</dbReference>
<dbReference type="Pfam" id="PF00886">
    <property type="entry name" value="Ribosomal_S16"/>
    <property type="match status" value="1"/>
</dbReference>
<dbReference type="SUPFAM" id="SSF54565">
    <property type="entry name" value="Ribosomal protein S16"/>
    <property type="match status" value="1"/>
</dbReference>
<dbReference type="PROSITE" id="PS00732">
    <property type="entry name" value="RIBOSOMAL_S16"/>
    <property type="match status" value="1"/>
</dbReference>
<organism>
    <name type="scientific">Bacillus cereus (strain ATCC 10987 / NRS 248)</name>
    <dbReference type="NCBI Taxonomy" id="222523"/>
    <lineage>
        <taxon>Bacteria</taxon>
        <taxon>Bacillati</taxon>
        <taxon>Bacillota</taxon>
        <taxon>Bacilli</taxon>
        <taxon>Bacillales</taxon>
        <taxon>Bacillaceae</taxon>
        <taxon>Bacillus</taxon>
        <taxon>Bacillus cereus group</taxon>
    </lineage>
</organism>
<comment type="similarity">
    <text evidence="1">Belongs to the bacterial ribosomal protein bS16 family.</text>
</comment>
<reference key="1">
    <citation type="journal article" date="2004" name="Nucleic Acids Res.">
        <title>The genome sequence of Bacillus cereus ATCC 10987 reveals metabolic adaptations and a large plasmid related to Bacillus anthracis pXO1.</title>
        <authorList>
            <person name="Rasko D.A."/>
            <person name="Ravel J."/>
            <person name="Oekstad O.A."/>
            <person name="Helgason E."/>
            <person name="Cer R.Z."/>
            <person name="Jiang L."/>
            <person name="Shores K.A."/>
            <person name="Fouts D.E."/>
            <person name="Tourasse N.J."/>
            <person name="Angiuoli S.V."/>
            <person name="Kolonay J.F."/>
            <person name="Nelson W.C."/>
            <person name="Kolstoe A.-B."/>
            <person name="Fraser C.M."/>
            <person name="Read T.D."/>
        </authorList>
    </citation>
    <scope>NUCLEOTIDE SEQUENCE [LARGE SCALE GENOMIC DNA]</scope>
    <source>
        <strain>ATCC 10987 / NRS 248</strain>
    </source>
</reference>
<gene>
    <name evidence="1" type="primary">rpsP</name>
    <name type="ordered locus">BCE_3886</name>
</gene>
<feature type="chain" id="PRO_0000167148" description="Small ribosomal subunit protein bS16">
    <location>
        <begin position="1"/>
        <end position="90"/>
    </location>
</feature>
<protein>
    <recommendedName>
        <fullName evidence="1">Small ribosomal subunit protein bS16</fullName>
    </recommendedName>
    <alternativeName>
        <fullName evidence="2">30S ribosomal protein S16</fullName>
    </alternativeName>
</protein>
<evidence type="ECO:0000255" key="1">
    <source>
        <dbReference type="HAMAP-Rule" id="MF_00385"/>
    </source>
</evidence>
<evidence type="ECO:0000305" key="2"/>
<name>RS16_BACC1</name>
<sequence>MAVKIRLKRMGAKKTPFYRVVVADSRSPRDGRFIEEIGTYNPVAQPAEVKINEEAALKWLGNGAKPSDTVRNLFSNQGIMEKFHLSKQGK</sequence>
<proteinExistence type="inferred from homology"/>
<accession>P62226</accession>
<keyword id="KW-0687">Ribonucleoprotein</keyword>
<keyword id="KW-0689">Ribosomal protein</keyword>